<name>HIS7_PSEAE</name>
<organism>
    <name type="scientific">Pseudomonas aeruginosa (strain ATCC 15692 / DSM 22644 / CIP 104116 / JCM 14847 / LMG 12228 / 1C / PRS 101 / PAO1)</name>
    <dbReference type="NCBI Taxonomy" id="208964"/>
    <lineage>
        <taxon>Bacteria</taxon>
        <taxon>Pseudomonadati</taxon>
        <taxon>Pseudomonadota</taxon>
        <taxon>Gammaproteobacteria</taxon>
        <taxon>Pseudomonadales</taxon>
        <taxon>Pseudomonadaceae</taxon>
        <taxon>Pseudomonas</taxon>
    </lineage>
</organism>
<protein>
    <recommendedName>
        <fullName evidence="1">Imidazoleglycerol-phosphate dehydratase</fullName>
        <shortName evidence="1">IGPD</shortName>
        <ecNumber evidence="1">4.2.1.19</ecNumber>
    </recommendedName>
</protein>
<accession>Q9HU41</accession>
<comment type="catalytic activity">
    <reaction evidence="1">
        <text>D-erythro-1-(imidazol-4-yl)glycerol 3-phosphate = 3-(imidazol-4-yl)-2-oxopropyl phosphate + H2O</text>
        <dbReference type="Rhea" id="RHEA:11040"/>
        <dbReference type="ChEBI" id="CHEBI:15377"/>
        <dbReference type="ChEBI" id="CHEBI:57766"/>
        <dbReference type="ChEBI" id="CHEBI:58278"/>
        <dbReference type="EC" id="4.2.1.19"/>
    </reaction>
</comment>
<comment type="pathway">
    <text evidence="1">Amino-acid biosynthesis; L-histidine biosynthesis; L-histidine from 5-phospho-alpha-D-ribose 1-diphosphate: step 6/9.</text>
</comment>
<comment type="subcellular location">
    <subcellularLocation>
        <location evidence="1">Cytoplasm</location>
    </subcellularLocation>
</comment>
<comment type="similarity">
    <text evidence="1">Belongs to the imidazoleglycerol-phosphate dehydratase family.</text>
</comment>
<dbReference type="EC" id="4.2.1.19" evidence="1"/>
<dbReference type="EMBL" id="AE004091">
    <property type="protein sequence ID" value="AAG08528.1"/>
    <property type="molecule type" value="Genomic_DNA"/>
</dbReference>
<dbReference type="PIR" id="C83003">
    <property type="entry name" value="C83003"/>
</dbReference>
<dbReference type="RefSeq" id="NP_253830.1">
    <property type="nucleotide sequence ID" value="NC_002516.2"/>
</dbReference>
<dbReference type="RefSeq" id="WP_003096088.1">
    <property type="nucleotide sequence ID" value="NZ_QZGE01000002.1"/>
</dbReference>
<dbReference type="SMR" id="Q9HU41"/>
<dbReference type="FunCoup" id="Q9HU41">
    <property type="interactions" value="442"/>
</dbReference>
<dbReference type="STRING" id="208964.PA5143"/>
<dbReference type="PaxDb" id="208964-PA5143"/>
<dbReference type="DNASU" id="878789"/>
<dbReference type="GeneID" id="77223672"/>
<dbReference type="GeneID" id="878789"/>
<dbReference type="KEGG" id="pae:PA5143"/>
<dbReference type="PATRIC" id="fig|208964.12.peg.5390"/>
<dbReference type="PseudoCAP" id="PA5143"/>
<dbReference type="HOGENOM" id="CLU_044308_3_0_6"/>
<dbReference type="InParanoid" id="Q9HU41"/>
<dbReference type="OrthoDB" id="9790411at2"/>
<dbReference type="PhylomeDB" id="Q9HU41"/>
<dbReference type="BioCyc" id="PAER208964:G1FZ6-5258-MONOMER"/>
<dbReference type="UniPathway" id="UPA00031">
    <property type="reaction ID" value="UER00011"/>
</dbReference>
<dbReference type="Proteomes" id="UP000002438">
    <property type="component" value="Chromosome"/>
</dbReference>
<dbReference type="GO" id="GO:0005737">
    <property type="term" value="C:cytoplasm"/>
    <property type="evidence" value="ECO:0007669"/>
    <property type="project" value="UniProtKB-SubCell"/>
</dbReference>
<dbReference type="GO" id="GO:0004424">
    <property type="term" value="F:imidazoleglycerol-phosphate dehydratase activity"/>
    <property type="evidence" value="ECO:0000318"/>
    <property type="project" value="GO_Central"/>
</dbReference>
<dbReference type="GO" id="GO:0000105">
    <property type="term" value="P:L-histidine biosynthetic process"/>
    <property type="evidence" value="ECO:0000318"/>
    <property type="project" value="GO_Central"/>
</dbReference>
<dbReference type="CDD" id="cd07914">
    <property type="entry name" value="IGPD"/>
    <property type="match status" value="1"/>
</dbReference>
<dbReference type="FunFam" id="3.30.230.40:FF:000002">
    <property type="entry name" value="Imidazoleglycerol-phosphate dehydratase"/>
    <property type="match status" value="1"/>
</dbReference>
<dbReference type="FunFam" id="3.30.230.40:FF:000003">
    <property type="entry name" value="Imidazoleglycerol-phosphate dehydratase HisB"/>
    <property type="match status" value="1"/>
</dbReference>
<dbReference type="Gene3D" id="3.30.230.40">
    <property type="entry name" value="Imidazole glycerol phosphate dehydratase, domain 1"/>
    <property type="match status" value="2"/>
</dbReference>
<dbReference type="HAMAP" id="MF_00076">
    <property type="entry name" value="HisB"/>
    <property type="match status" value="1"/>
</dbReference>
<dbReference type="InterPro" id="IPR038494">
    <property type="entry name" value="IGPD_sf"/>
</dbReference>
<dbReference type="InterPro" id="IPR000807">
    <property type="entry name" value="ImidazoleglycerolP_deHydtase"/>
</dbReference>
<dbReference type="InterPro" id="IPR020565">
    <property type="entry name" value="ImidazoleglycerP_deHydtase_CS"/>
</dbReference>
<dbReference type="InterPro" id="IPR020568">
    <property type="entry name" value="Ribosomal_Su5_D2-typ_SF"/>
</dbReference>
<dbReference type="NCBIfam" id="NF002106">
    <property type="entry name" value="PRK00951.1-1"/>
    <property type="match status" value="1"/>
</dbReference>
<dbReference type="NCBIfam" id="NF002109">
    <property type="entry name" value="PRK00951.1-5"/>
    <property type="match status" value="1"/>
</dbReference>
<dbReference type="NCBIfam" id="NF002111">
    <property type="entry name" value="PRK00951.2-1"/>
    <property type="match status" value="1"/>
</dbReference>
<dbReference type="NCBIfam" id="NF002114">
    <property type="entry name" value="PRK00951.2-4"/>
    <property type="match status" value="1"/>
</dbReference>
<dbReference type="PANTHER" id="PTHR23133:SF2">
    <property type="entry name" value="IMIDAZOLEGLYCEROL-PHOSPHATE DEHYDRATASE"/>
    <property type="match status" value="1"/>
</dbReference>
<dbReference type="PANTHER" id="PTHR23133">
    <property type="entry name" value="IMIDAZOLEGLYCEROL-PHOSPHATE DEHYDRATASE HIS7"/>
    <property type="match status" value="1"/>
</dbReference>
<dbReference type="Pfam" id="PF00475">
    <property type="entry name" value="IGPD"/>
    <property type="match status" value="1"/>
</dbReference>
<dbReference type="SUPFAM" id="SSF54211">
    <property type="entry name" value="Ribosomal protein S5 domain 2-like"/>
    <property type="match status" value="2"/>
</dbReference>
<dbReference type="PROSITE" id="PS00954">
    <property type="entry name" value="IGP_DEHYDRATASE_1"/>
    <property type="match status" value="1"/>
</dbReference>
<dbReference type="PROSITE" id="PS00955">
    <property type="entry name" value="IGP_DEHYDRATASE_2"/>
    <property type="match status" value="1"/>
</dbReference>
<evidence type="ECO:0000255" key="1">
    <source>
        <dbReference type="HAMAP-Rule" id="MF_00076"/>
    </source>
</evidence>
<feature type="chain" id="PRO_0000158156" description="Imidazoleglycerol-phosphate dehydratase">
    <location>
        <begin position="1"/>
        <end position="197"/>
    </location>
</feature>
<proteinExistence type="inferred from homology"/>
<sequence>MAERKASVARDTLETQIKVSIDLDGTGKARFDTGVPFLDHMMDQIARHGLIDLDIECKGDLHIDDHHTVEDIGITLGQAFAKAIGDKKGIRRYGHAYVPLDEALSRVVIDFSGRPGLQMHVPFTRASVGGFDVDLFMEFFQGFVNHAQVTLHIDNLRGHNTHHQIETVFKAFGRALRMAIELDERMAGQMPSTKGCL</sequence>
<reference key="1">
    <citation type="journal article" date="2000" name="Nature">
        <title>Complete genome sequence of Pseudomonas aeruginosa PAO1, an opportunistic pathogen.</title>
        <authorList>
            <person name="Stover C.K."/>
            <person name="Pham X.-Q.T."/>
            <person name="Erwin A.L."/>
            <person name="Mizoguchi S.D."/>
            <person name="Warrener P."/>
            <person name="Hickey M.J."/>
            <person name="Brinkman F.S.L."/>
            <person name="Hufnagle W.O."/>
            <person name="Kowalik D.J."/>
            <person name="Lagrou M."/>
            <person name="Garber R.L."/>
            <person name="Goltry L."/>
            <person name="Tolentino E."/>
            <person name="Westbrock-Wadman S."/>
            <person name="Yuan Y."/>
            <person name="Brody L.L."/>
            <person name="Coulter S.N."/>
            <person name="Folger K.R."/>
            <person name="Kas A."/>
            <person name="Larbig K."/>
            <person name="Lim R.M."/>
            <person name="Smith K.A."/>
            <person name="Spencer D.H."/>
            <person name="Wong G.K.-S."/>
            <person name="Wu Z."/>
            <person name="Paulsen I.T."/>
            <person name="Reizer J."/>
            <person name="Saier M.H. Jr."/>
            <person name="Hancock R.E.W."/>
            <person name="Lory S."/>
            <person name="Olson M.V."/>
        </authorList>
    </citation>
    <scope>NUCLEOTIDE SEQUENCE [LARGE SCALE GENOMIC DNA]</scope>
    <source>
        <strain>ATCC 15692 / DSM 22644 / CIP 104116 / JCM 14847 / LMG 12228 / 1C / PRS 101 / PAO1</strain>
    </source>
</reference>
<gene>
    <name evidence="1" type="primary">hisB</name>
    <name type="ordered locus">PA5143</name>
</gene>
<keyword id="KW-0028">Amino-acid biosynthesis</keyword>
<keyword id="KW-0963">Cytoplasm</keyword>
<keyword id="KW-0368">Histidine biosynthesis</keyword>
<keyword id="KW-0456">Lyase</keyword>
<keyword id="KW-1185">Reference proteome</keyword>